<accession>B5XJV3</accession>
<dbReference type="EC" id="3.4.24.-" evidence="1"/>
<dbReference type="EMBL" id="CP000829">
    <property type="protein sequence ID" value="ACI60615.1"/>
    <property type="molecule type" value="Genomic_DNA"/>
</dbReference>
<dbReference type="SMR" id="B5XJV3"/>
<dbReference type="KEGG" id="soz:Spy49_0277"/>
<dbReference type="HOGENOM" id="CLU_042266_2_1_9"/>
<dbReference type="Proteomes" id="UP000001039">
    <property type="component" value="Chromosome"/>
</dbReference>
<dbReference type="GO" id="GO:0005886">
    <property type="term" value="C:plasma membrane"/>
    <property type="evidence" value="ECO:0007669"/>
    <property type="project" value="UniProtKB-SubCell"/>
</dbReference>
<dbReference type="GO" id="GO:0004222">
    <property type="term" value="F:metalloendopeptidase activity"/>
    <property type="evidence" value="ECO:0007669"/>
    <property type="project" value="UniProtKB-UniRule"/>
</dbReference>
<dbReference type="GO" id="GO:0008270">
    <property type="term" value="F:zinc ion binding"/>
    <property type="evidence" value="ECO:0007669"/>
    <property type="project" value="UniProtKB-UniRule"/>
</dbReference>
<dbReference type="GO" id="GO:0006508">
    <property type="term" value="P:proteolysis"/>
    <property type="evidence" value="ECO:0007669"/>
    <property type="project" value="UniProtKB-KW"/>
</dbReference>
<dbReference type="CDD" id="cd07340">
    <property type="entry name" value="M48B_Htpx_like"/>
    <property type="match status" value="1"/>
</dbReference>
<dbReference type="Gene3D" id="3.30.2010.10">
    <property type="entry name" value="Metalloproteases ('zincins'), catalytic domain"/>
    <property type="match status" value="1"/>
</dbReference>
<dbReference type="HAMAP" id="MF_00188">
    <property type="entry name" value="Pept_M48_protease_HtpX"/>
    <property type="match status" value="1"/>
</dbReference>
<dbReference type="InterPro" id="IPR050083">
    <property type="entry name" value="HtpX_protease"/>
</dbReference>
<dbReference type="InterPro" id="IPR022919">
    <property type="entry name" value="Pept_M48_protease_HtpX"/>
</dbReference>
<dbReference type="InterPro" id="IPR001915">
    <property type="entry name" value="Peptidase_M48"/>
</dbReference>
<dbReference type="NCBIfam" id="NF003425">
    <property type="entry name" value="PRK04897.1"/>
    <property type="match status" value="1"/>
</dbReference>
<dbReference type="PANTHER" id="PTHR43221">
    <property type="entry name" value="PROTEASE HTPX"/>
    <property type="match status" value="1"/>
</dbReference>
<dbReference type="PANTHER" id="PTHR43221:SF1">
    <property type="entry name" value="PROTEASE HTPX"/>
    <property type="match status" value="1"/>
</dbReference>
<dbReference type="Pfam" id="PF01435">
    <property type="entry name" value="Peptidase_M48"/>
    <property type="match status" value="1"/>
</dbReference>
<organism>
    <name type="scientific">Streptococcus pyogenes serotype M49 (strain NZ131)</name>
    <dbReference type="NCBI Taxonomy" id="471876"/>
    <lineage>
        <taxon>Bacteria</taxon>
        <taxon>Bacillati</taxon>
        <taxon>Bacillota</taxon>
        <taxon>Bacilli</taxon>
        <taxon>Lactobacillales</taxon>
        <taxon>Streptococcaceae</taxon>
        <taxon>Streptococcus</taxon>
    </lineage>
</organism>
<comment type="cofactor">
    <cofactor evidence="1">
        <name>Zn(2+)</name>
        <dbReference type="ChEBI" id="CHEBI:29105"/>
    </cofactor>
    <text evidence="1">Binds 1 zinc ion per subunit.</text>
</comment>
<comment type="subcellular location">
    <subcellularLocation>
        <location evidence="1">Cell membrane</location>
        <topology evidence="1">Multi-pass membrane protein</topology>
    </subcellularLocation>
</comment>
<comment type="similarity">
    <text evidence="1">Belongs to the peptidase M48B family.</text>
</comment>
<keyword id="KW-1003">Cell membrane</keyword>
<keyword id="KW-0378">Hydrolase</keyword>
<keyword id="KW-0472">Membrane</keyword>
<keyword id="KW-0479">Metal-binding</keyword>
<keyword id="KW-0482">Metalloprotease</keyword>
<keyword id="KW-0645">Protease</keyword>
<keyword id="KW-0812">Transmembrane</keyword>
<keyword id="KW-1133">Transmembrane helix</keyword>
<keyword id="KW-0862">Zinc</keyword>
<reference key="1">
    <citation type="journal article" date="2008" name="J. Bacteriol.">
        <title>Genome sequence of a nephritogenic and highly transformable M49 strain of Streptococcus pyogenes.</title>
        <authorList>
            <person name="McShan W.M."/>
            <person name="Ferretti J.J."/>
            <person name="Karasawa T."/>
            <person name="Suvorov A.N."/>
            <person name="Lin S."/>
            <person name="Qin B."/>
            <person name="Jia H."/>
            <person name="Kenton S."/>
            <person name="Najar F."/>
            <person name="Wu H."/>
            <person name="Scott J."/>
            <person name="Roe B.A."/>
            <person name="Savic D.J."/>
        </authorList>
    </citation>
    <scope>NUCLEOTIDE SEQUENCE [LARGE SCALE GENOMIC DNA]</scope>
    <source>
        <strain>NZ131</strain>
    </source>
</reference>
<feature type="chain" id="PRO_1000098853" description="Protease HtpX homolog">
    <location>
        <begin position="1"/>
        <end position="298"/>
    </location>
</feature>
<feature type="transmembrane region" description="Helical" evidence="1">
    <location>
        <begin position="14"/>
        <end position="34"/>
    </location>
</feature>
<feature type="transmembrane region" description="Helical" evidence="1">
    <location>
        <begin position="39"/>
        <end position="59"/>
    </location>
</feature>
<feature type="transmembrane region" description="Helical" evidence="1">
    <location>
        <begin position="158"/>
        <end position="178"/>
    </location>
</feature>
<feature type="transmembrane region" description="Helical" evidence="1">
    <location>
        <begin position="197"/>
        <end position="217"/>
    </location>
</feature>
<feature type="active site" evidence="1">
    <location>
        <position position="144"/>
    </location>
</feature>
<feature type="binding site" evidence="1">
    <location>
        <position position="143"/>
    </location>
    <ligand>
        <name>Zn(2+)</name>
        <dbReference type="ChEBI" id="CHEBI:29105"/>
        <note>catalytic</note>
    </ligand>
</feature>
<feature type="binding site" evidence="1">
    <location>
        <position position="147"/>
    </location>
    <ligand>
        <name>Zn(2+)</name>
        <dbReference type="ChEBI" id="CHEBI:29105"/>
        <note>catalytic</note>
    </ligand>
</feature>
<feature type="binding site" evidence="1">
    <location>
        <position position="226"/>
    </location>
    <ligand>
        <name>Zn(2+)</name>
        <dbReference type="ChEBI" id="CHEBI:29105"/>
        <note>catalytic</note>
    </ligand>
</feature>
<gene>
    <name evidence="1" type="primary">htpX</name>
    <name type="ordered locus">Spy49_0277</name>
</gene>
<protein>
    <recommendedName>
        <fullName evidence="1">Protease HtpX homolog</fullName>
        <ecNumber evidence="1">3.4.24.-</ecNumber>
    </recommendedName>
</protein>
<proteinExistence type="inferred from homology"/>
<name>HTPX_STRPZ</name>
<sequence>MLYQQISQNKQRTVVLLVVFFALLALIGASAGYLLLDNYAMGLVLALVIGMIYATSMIFQSTSLVMSMNNAREVTEKEAPGFFHIVEDMAMVAQIPMPRVFIIEDPSLNAFATGSSPQNAAVAATTGLLEVMNREELEGVIGHEISHIRNYDIRISTIAVALASAVTVISSIGGRMLWYGGGSRRQRDDGDDDVLRIITLLLSLLSLLLAPLVASLIQLAISRQREYLADASSVELTRNPQGMIKALEKLQLSQPMKHPVDDASAALYINEPRKKRSFSSLFSTHPPIEERIERLKNM</sequence>
<evidence type="ECO:0000255" key="1">
    <source>
        <dbReference type="HAMAP-Rule" id="MF_00188"/>
    </source>
</evidence>